<reference key="1">
    <citation type="journal article" date="2010" name="Planta">
        <title>Cloning and characterization of a novel gene that encodes (S)-beta-bisabolene synthase from ginger, Zingiber officinale.</title>
        <authorList>
            <person name="Fujisawa M."/>
            <person name="Harada H."/>
            <person name="Kenmoku H."/>
            <person name="Mizutani S."/>
            <person name="Misawa N."/>
        </authorList>
    </citation>
    <scope>NUCLEOTIDE SEQUENCE [MRNA]</scope>
    <scope>FUNCTION</scope>
    <scope>CATALYTIC ACTIVITY</scope>
    <scope>TISSUE SPECIFICITY</scope>
    <source>
        <strain>cv. Kintoki</strain>
    </source>
</reference>
<feature type="chain" id="PRO_0000412109" description="(S)-beta-bisabolene synthase">
    <location>
        <begin position="1"/>
        <end position="550"/>
    </location>
</feature>
<feature type="short sequence motif" description="DDXXD motif">
    <location>
        <begin position="303"/>
        <end position="307"/>
    </location>
</feature>
<feature type="binding site" evidence="1">
    <location>
        <position position="303"/>
    </location>
    <ligand>
        <name>Mg(2+)</name>
        <dbReference type="ChEBI" id="CHEBI:18420"/>
        <label>1</label>
    </ligand>
</feature>
<feature type="binding site" evidence="1">
    <location>
        <position position="303"/>
    </location>
    <ligand>
        <name>Mg(2+)</name>
        <dbReference type="ChEBI" id="CHEBI:18420"/>
        <label>2</label>
    </ligand>
</feature>
<feature type="binding site" evidence="1">
    <location>
        <position position="307"/>
    </location>
    <ligand>
        <name>Mg(2+)</name>
        <dbReference type="ChEBI" id="CHEBI:18420"/>
        <label>1</label>
    </ligand>
</feature>
<feature type="binding site" evidence="1">
    <location>
        <position position="307"/>
    </location>
    <ligand>
        <name>Mg(2+)</name>
        <dbReference type="ChEBI" id="CHEBI:18420"/>
        <label>2</label>
    </ligand>
</feature>
<feature type="binding site" evidence="1">
    <location>
        <position position="451"/>
    </location>
    <ligand>
        <name>Mg(2+)</name>
        <dbReference type="ChEBI" id="CHEBI:18420"/>
        <label>3</label>
    </ligand>
</feature>
<feature type="binding site" evidence="1">
    <location>
        <position position="455"/>
    </location>
    <ligand>
        <name>Mg(2+)</name>
        <dbReference type="ChEBI" id="CHEBI:18420"/>
        <label>3</label>
    </ligand>
</feature>
<sequence length="550" mass="64431">MELVDTPSLEVFEDVVVDRQVAGFDPSFWGDYFITNQKSQSEAWMNERAEELKNEVRSMFQNVTGILQTMNLIDTIQLLGLDYHFMEEIAKALDHLKDVDMSKYGLYEVALHFRLLRQKGFNISSDVFKKYKDKEGKFMEELKDDAKGLLSLYNAAYFGTKEETILDEAISFTKDNLTSLLKDLNPPFAKLVSLTLKTPIQRSMKRIFTRSYISIYQDEPTLNETILELAKLDFNMLQCLHQKELKKICAWWNNLNLDIMHLNFIRDRVVECYCWSMVIRHEPSCSRARLISTKLLMLITVLDDTYDSYSTLEESRLLTDAIQRWNPNEVDQLPEYLRDFFLKMLNIFQEFENELAPEEKFRILYLKEEWKIQSQSYFKECQWRDDNYVPKLEEHMRLSIISVGFVLFYCGFLSGMEEAVATKDAFEWFASFPKIIEACATIIRITNDITSMEREQKRAHVASTVDCYMKEYGTSKDVACEKLLGFVEDAWKTINEELLTETGLSREVIELSFHSAQTTEFVYKHVDAFTEPNTTMKENIFSLLVHPIPI</sequence>
<protein>
    <recommendedName>
        <fullName>(S)-beta-bisabolene synthase</fullName>
        <ecNumber>4.2.3.55</ecNumber>
    </recommendedName>
    <alternativeName>
        <fullName>Terpene synthase 1</fullName>
        <shortName>ZoTPS1</shortName>
    </alternativeName>
</protein>
<keyword id="KW-0456">Lyase</keyword>
<keyword id="KW-0460">Magnesium</keyword>
<keyword id="KW-0464">Manganese</keyword>
<keyword id="KW-0479">Metal-binding</keyword>
<dbReference type="EC" id="4.2.3.55"/>
<dbReference type="EMBL" id="AB511914">
    <property type="protein sequence ID" value="BAI67934.1"/>
    <property type="molecule type" value="mRNA"/>
</dbReference>
<dbReference type="SMR" id="D2YZP9"/>
<dbReference type="KEGG" id="ag:BAI67934"/>
<dbReference type="GO" id="GO:0000287">
    <property type="term" value="F:magnesium ion binding"/>
    <property type="evidence" value="ECO:0007669"/>
    <property type="project" value="InterPro"/>
</dbReference>
<dbReference type="GO" id="GO:0010333">
    <property type="term" value="F:terpene synthase activity"/>
    <property type="evidence" value="ECO:0007669"/>
    <property type="project" value="InterPro"/>
</dbReference>
<dbReference type="GO" id="GO:0016102">
    <property type="term" value="P:diterpenoid biosynthetic process"/>
    <property type="evidence" value="ECO:0007669"/>
    <property type="project" value="InterPro"/>
</dbReference>
<dbReference type="CDD" id="cd00684">
    <property type="entry name" value="Terpene_cyclase_plant_C1"/>
    <property type="match status" value="1"/>
</dbReference>
<dbReference type="FunFam" id="1.10.600.10:FF:000007">
    <property type="entry name" value="Isoprene synthase, chloroplastic"/>
    <property type="match status" value="1"/>
</dbReference>
<dbReference type="FunFam" id="1.50.10.130:FF:000001">
    <property type="entry name" value="Isoprene synthase, chloroplastic"/>
    <property type="match status" value="1"/>
</dbReference>
<dbReference type="Gene3D" id="1.10.600.10">
    <property type="entry name" value="Farnesyl Diphosphate Synthase"/>
    <property type="match status" value="1"/>
</dbReference>
<dbReference type="Gene3D" id="1.50.10.130">
    <property type="entry name" value="Terpene synthase, N-terminal domain"/>
    <property type="match status" value="1"/>
</dbReference>
<dbReference type="InterPro" id="IPR008949">
    <property type="entry name" value="Isoprenoid_synthase_dom_sf"/>
</dbReference>
<dbReference type="InterPro" id="IPR034741">
    <property type="entry name" value="Terpene_cyclase-like_1_C"/>
</dbReference>
<dbReference type="InterPro" id="IPR044814">
    <property type="entry name" value="Terpene_cyclase_plant_C1"/>
</dbReference>
<dbReference type="InterPro" id="IPR001906">
    <property type="entry name" value="Terpene_synth_N"/>
</dbReference>
<dbReference type="InterPro" id="IPR036965">
    <property type="entry name" value="Terpene_synth_N_sf"/>
</dbReference>
<dbReference type="InterPro" id="IPR050148">
    <property type="entry name" value="Terpene_synthase-like"/>
</dbReference>
<dbReference type="InterPro" id="IPR005630">
    <property type="entry name" value="Terpene_synthase_metal-bd"/>
</dbReference>
<dbReference type="InterPro" id="IPR008930">
    <property type="entry name" value="Terpenoid_cyclase/PrenylTrfase"/>
</dbReference>
<dbReference type="PANTHER" id="PTHR31225:SF93">
    <property type="entry name" value="ALPHA-HUMULENE_(-)-(E)-BETA-CARYOPHYLLENE SYNTHASE"/>
    <property type="match status" value="1"/>
</dbReference>
<dbReference type="PANTHER" id="PTHR31225">
    <property type="entry name" value="OS04G0344100 PROTEIN-RELATED"/>
    <property type="match status" value="1"/>
</dbReference>
<dbReference type="Pfam" id="PF01397">
    <property type="entry name" value="Terpene_synth"/>
    <property type="match status" value="1"/>
</dbReference>
<dbReference type="Pfam" id="PF03936">
    <property type="entry name" value="Terpene_synth_C"/>
    <property type="match status" value="1"/>
</dbReference>
<dbReference type="SFLD" id="SFLDS00005">
    <property type="entry name" value="Isoprenoid_Synthase_Type_I"/>
    <property type="match status" value="1"/>
</dbReference>
<dbReference type="SFLD" id="SFLDG01019">
    <property type="entry name" value="Terpene_Cyclase_Like_1_C_Termi"/>
    <property type="match status" value="1"/>
</dbReference>
<dbReference type="SUPFAM" id="SSF48239">
    <property type="entry name" value="Terpenoid cyclases/Protein prenyltransferases"/>
    <property type="match status" value="1"/>
</dbReference>
<dbReference type="SUPFAM" id="SSF48576">
    <property type="entry name" value="Terpenoid synthases"/>
    <property type="match status" value="1"/>
</dbReference>
<evidence type="ECO:0000250" key="1"/>
<evidence type="ECO:0000269" key="2">
    <source>
    </source>
</evidence>
<evidence type="ECO:0000305" key="3"/>
<name>BISS_ZINOF</name>
<comment type="function">
    <text evidence="2">Sesquiterpene synthase involved in the biosynthesis of bisabolene.</text>
</comment>
<comment type="catalytic activity">
    <reaction evidence="2">
        <text>(2E,6E)-farnesyl diphosphate = (S)-beta-bisabolene + diphosphate</text>
        <dbReference type="Rhea" id="RHEA:28266"/>
        <dbReference type="ChEBI" id="CHEBI:33019"/>
        <dbReference type="ChEBI" id="CHEBI:49263"/>
        <dbReference type="ChEBI" id="CHEBI:175763"/>
        <dbReference type="EC" id="4.2.3.55"/>
    </reaction>
</comment>
<comment type="cofactor">
    <cofactor evidence="1">
        <name>Mg(2+)</name>
        <dbReference type="ChEBI" id="CHEBI:18420"/>
    </cofactor>
    <cofactor evidence="1">
        <name>Mn(2+)</name>
        <dbReference type="ChEBI" id="CHEBI:29035"/>
    </cofactor>
    <text evidence="1">Binds 3 Mg(2+) or Mn(2+) ions per subunit.</text>
</comment>
<comment type="tissue specificity">
    <text evidence="2">Expressed only in young rhizomes. Not detected in leaves, roots and mature rhizomes.</text>
</comment>
<comment type="domain">
    <text>The Asp-Asp-Xaa-Xaa-Asp/Glu (DDXXD/E) motif is important for the catalytic activity, presumably through binding to Mg(2+).</text>
</comment>
<comment type="similarity">
    <text evidence="3">Belongs to the terpene synthase family. Tpsa subfamily.</text>
</comment>
<gene>
    <name type="primary">TPS1</name>
</gene>
<proteinExistence type="evidence at protein level"/>
<organism>
    <name type="scientific">Zingiber officinale</name>
    <name type="common">Ginger</name>
    <name type="synonym">Amomum zingiber</name>
    <dbReference type="NCBI Taxonomy" id="94328"/>
    <lineage>
        <taxon>Eukaryota</taxon>
        <taxon>Viridiplantae</taxon>
        <taxon>Streptophyta</taxon>
        <taxon>Embryophyta</taxon>
        <taxon>Tracheophyta</taxon>
        <taxon>Spermatophyta</taxon>
        <taxon>Magnoliopsida</taxon>
        <taxon>Liliopsida</taxon>
        <taxon>Zingiberales</taxon>
        <taxon>Zingiberaceae</taxon>
        <taxon>Zingiber</taxon>
    </lineage>
</organism>
<accession>D2YZP9</accession>